<protein>
    <recommendedName>
        <fullName evidence="4">Lipid A 1-phosphatase</fullName>
        <ecNumber evidence="5">3.1.-.-</ecNumber>
    </recommendedName>
</protein>
<keyword id="KW-0378">Hydrolase</keyword>
<keyword id="KW-0441">Lipid A biosynthesis</keyword>
<keyword id="KW-0444">Lipid biosynthesis</keyword>
<keyword id="KW-0443">Lipid metabolism</keyword>
<keyword id="KW-0448">Lipopolysaccharide biosynthesis</keyword>
<keyword id="KW-0574">Periplasm</keyword>
<keyword id="KW-0732">Signal</keyword>
<keyword id="KW-0843">Virulence</keyword>
<gene>
    <name evidence="5" type="primary">lpxE</name>
    <name evidence="4" type="synonym">PG1773</name>
    <name type="ordered locus">PGN_1713</name>
</gene>
<proteinExistence type="inferred from homology"/>
<comment type="function">
    <text evidence="2">Removes the 1-phosphate group from lipid A species. Absence of phosphate groups in lipid A renders the bacteria resistant to host-derived cationic antimicrobial peptides (CAMP) and allowing it to camouflage itself from the host innate immune response.</text>
</comment>
<comment type="pathway">
    <text evidence="5">Bacterial outer membrane biogenesis; LPS lipid A biosynthesis.</text>
</comment>
<comment type="subcellular location">
    <subcellularLocation>
        <location evidence="5">Periplasm</location>
    </subcellularLocation>
</comment>
<comment type="disruption phenotype">
    <text evidence="2 3">No longer responds to changes in hemin, decreased removal of 1-phosphate from lipid A species. Accumulates bi-phosphorylated pentaacyl and tetraacyl 1-phosphate lipid A species. Lipopolysaccharide (LPS) from this strain is a mild inducer of the human innate immune response via Toll-like receptor 4 (TLR4) in cultured HEK293 cells; double lpxE-lpxF mutants are more potent than either single mutant. No change in resistance to the cationic antimicrobial peptide (CAMP) polymyxin B. Double lpxE-lpxF mutants accumulate multiple mono- and bi-phosphorylated lipid A species (PubMed:19552698). Unable to colonize rabbit periodontium, a model for periodontal disease (PubMed:24478080).</text>
</comment>
<comment type="miscellaneous">
    <text evidence="2">When grown in low hemin conditions the major lipid A species are non-phosphorylated tetraacyl and 4'-phosphate pentaacyl lipid A, while under high hemin conditions the major lipid A species are non-phosphorylated tetraacyl and 1-phosphate tetraacyl lipid A (hemin is protoporphyrin IX containing Fe(3+) with a chloride ligand (CHEBI:50385) involved in the change from healthy to diseased gums).</text>
</comment>
<reference key="1">
    <citation type="journal article" date="2008" name="DNA Res.">
        <title>Determination of the genome sequence of Porphyromonas gingivalis strain ATCC 33277 and genomic comparison with strain W83 revealed extensive genome rearrangements in P. gingivalis.</title>
        <authorList>
            <person name="Naito M."/>
            <person name="Hirakawa H."/>
            <person name="Yamashita A."/>
            <person name="Ohara N."/>
            <person name="Shoji M."/>
            <person name="Yukitake H."/>
            <person name="Nakayama K."/>
            <person name="Toh H."/>
            <person name="Yoshimura F."/>
            <person name="Kuhara S."/>
            <person name="Hattori M."/>
            <person name="Hayashi T."/>
            <person name="Nakayama K."/>
        </authorList>
    </citation>
    <scope>NUCLEOTIDE SEQUENCE [LARGE SCALE GENOMIC DNA]</scope>
    <source>
        <strain>ATCC 33277 / DSM 20709 / CIP 103683 / JCM 12257 / NCTC 11834 / 2561</strain>
    </source>
</reference>
<reference key="2">
    <citation type="journal article" date="2009" name="Cell. Microbiol.">
        <title>Human Toll-like receptor 4 responses to P. gingivalis are regulated by lipid A 1- and 4'-phosphatase activities.</title>
        <authorList>
            <person name="Coats S.R."/>
            <person name="Jones J.W."/>
            <person name="Do C.T."/>
            <person name="Braham P.H."/>
            <person name="Bainbridge B.W."/>
            <person name="To T.T."/>
            <person name="Goodlett D.R."/>
            <person name="Ernst R.K."/>
            <person name="Darveau R.P."/>
        </authorList>
    </citation>
    <scope>FUNCTION</scope>
    <scope>DISRUPTION PHENOTYPE</scope>
    <scope>LIPID A STRUCTURE</scope>
    <source>
        <strain>ATCC 33277 / DSM 20709 / CIP 103683 / JCM 12257 / NCTC 11834 / 2561</strain>
    </source>
</reference>
<reference key="3">
    <citation type="journal article" date="2014" name="Infect. Immun.">
        <title>Porphyromonas gingivalis lipid A phosphatase activity is critical for colonization and increasing the commensal load in the rabbit ligature model.</title>
        <authorList>
            <person name="Zenobia C."/>
            <person name="Hasturk H."/>
            <person name="Nguyen D."/>
            <person name="Van Dyke T.E."/>
            <person name="Kantarci A."/>
            <person name="Darveau R.P."/>
        </authorList>
    </citation>
    <scope>DISRUPTION PHENOTYPE</scope>
    <source>
        <strain>A7436</strain>
    </source>
</reference>
<accession>B2RLI7</accession>
<feature type="signal peptide" evidence="1">
    <location>
        <begin position="1"/>
        <end position="22"/>
    </location>
</feature>
<feature type="chain" id="PRO_0000432491" description="Lipid A 1-phosphatase" evidence="1">
    <location>
        <begin position="23"/>
        <end position="445"/>
    </location>
</feature>
<evidence type="ECO:0000255" key="1"/>
<evidence type="ECO:0000269" key="2">
    <source>
    </source>
</evidence>
<evidence type="ECO:0000269" key="3">
    <source>
    </source>
</evidence>
<evidence type="ECO:0000303" key="4">
    <source>
    </source>
</evidence>
<evidence type="ECO:0000305" key="5"/>
<dbReference type="EC" id="3.1.-.-" evidence="5"/>
<dbReference type="EMBL" id="AP009380">
    <property type="protein sequence ID" value="BAG34232.1"/>
    <property type="molecule type" value="Genomic_DNA"/>
</dbReference>
<dbReference type="RefSeq" id="WP_012458477.1">
    <property type="nucleotide sequence ID" value="NC_010729.1"/>
</dbReference>
<dbReference type="GeneID" id="29256877"/>
<dbReference type="KEGG" id="pgn:PGN_1713"/>
<dbReference type="eggNOG" id="COG0671">
    <property type="taxonomic scope" value="Bacteria"/>
</dbReference>
<dbReference type="HOGENOM" id="CLU_615168_0_0_10"/>
<dbReference type="OrthoDB" id="9773582at2"/>
<dbReference type="BioCyc" id="PGIN431947:G1G2V-1921-MONOMER"/>
<dbReference type="UniPathway" id="UPA00973"/>
<dbReference type="Proteomes" id="UP000008842">
    <property type="component" value="Chromosome"/>
</dbReference>
<dbReference type="GO" id="GO:0016020">
    <property type="term" value="C:membrane"/>
    <property type="evidence" value="ECO:0007669"/>
    <property type="project" value="GOC"/>
</dbReference>
<dbReference type="GO" id="GO:0042597">
    <property type="term" value="C:periplasmic space"/>
    <property type="evidence" value="ECO:0007669"/>
    <property type="project" value="UniProtKB-SubCell"/>
</dbReference>
<dbReference type="GO" id="GO:0016791">
    <property type="term" value="F:phosphatase activity"/>
    <property type="evidence" value="ECO:0000315"/>
    <property type="project" value="UniProtKB"/>
</dbReference>
<dbReference type="GO" id="GO:0009245">
    <property type="term" value="P:lipid A biosynthetic process"/>
    <property type="evidence" value="ECO:0000315"/>
    <property type="project" value="UniProtKB"/>
</dbReference>
<dbReference type="GO" id="GO:0009103">
    <property type="term" value="P:lipopolysaccharide biosynthetic process"/>
    <property type="evidence" value="ECO:0007669"/>
    <property type="project" value="UniProtKB-KW"/>
</dbReference>
<dbReference type="CDD" id="cd03394">
    <property type="entry name" value="PAP2_like_5"/>
    <property type="match status" value="1"/>
</dbReference>
<dbReference type="FunFam" id="1.20.144.10:FF:000090">
    <property type="entry name" value="Lipid A 1-phosphatase"/>
    <property type="match status" value="1"/>
</dbReference>
<dbReference type="Gene3D" id="2.40.160.20">
    <property type="match status" value="1"/>
</dbReference>
<dbReference type="Gene3D" id="1.20.144.10">
    <property type="entry name" value="Phosphatidic acid phosphatase type 2/haloperoxidase"/>
    <property type="match status" value="1"/>
</dbReference>
<dbReference type="InterPro" id="IPR036938">
    <property type="entry name" value="P_Acid_Pase_2/haloperoxi_sf"/>
</dbReference>
<dbReference type="InterPro" id="IPR000326">
    <property type="entry name" value="P_Acid_Pase_2/haloperoxidase"/>
</dbReference>
<dbReference type="PANTHER" id="PTHR14969:SF13">
    <property type="entry name" value="AT30094P"/>
    <property type="match status" value="1"/>
</dbReference>
<dbReference type="PANTHER" id="PTHR14969">
    <property type="entry name" value="SPHINGOSINE-1-PHOSPHATE PHOSPHOHYDROLASE"/>
    <property type="match status" value="1"/>
</dbReference>
<dbReference type="Pfam" id="PF01569">
    <property type="entry name" value="PAP2"/>
    <property type="match status" value="1"/>
</dbReference>
<dbReference type="SMART" id="SM00014">
    <property type="entry name" value="acidPPc"/>
    <property type="match status" value="1"/>
</dbReference>
<dbReference type="SUPFAM" id="SSF48317">
    <property type="entry name" value="Acid phosphatase/Vanadium-dependent haloperoxidase"/>
    <property type="match status" value="1"/>
</dbReference>
<organism>
    <name type="scientific">Porphyromonas gingivalis (strain ATCC 33277 / DSM 20709 / CIP 103683 / JCM 12257 / NCTC 11834 / 2561)</name>
    <dbReference type="NCBI Taxonomy" id="431947"/>
    <lineage>
        <taxon>Bacteria</taxon>
        <taxon>Pseudomonadati</taxon>
        <taxon>Bacteroidota</taxon>
        <taxon>Bacteroidia</taxon>
        <taxon>Bacteroidales</taxon>
        <taxon>Porphyromonadaceae</taxon>
        <taxon>Porphyromonas</taxon>
    </lineage>
</organism>
<name>LPXE_PORG3</name>
<sequence length="445" mass="49486">MNRESFLLLLVLLFALPLHLQASSPCNNMADTTCISDSAKMFPPAIGVYHVKPMKNTLRHSLPLVAASLLTFNVDDNIRELRFTGAGSFHTKIDNVSQLVPLMAQLSMRGFGYKGRSKSWGKMLVSDALGMALMGGMVNAGKYSFGRLRPDGTAANSYPSGHTATAFACATLFHLEYGSRSPWYSVAGYTVASFTGISRIVNNRHWASDVLCGAAVGILVGELGYWISDLIFRDPTGYNYKLTKKQEGTLESMVISLSTGNRYINRQMDFEGKTVERTDAFGMNLKTTFNPSFARWVRIGLQFSVSTEKQKGLTRERPAKVFVAPAISLGLSAGVEWHPWQRASVWAEILPSILFRTDFTNAQDKPDEMSSKLHRRSSFQPAFQVGVAYRVSDHMGIEAHAGYQLGEAVYHLMEETSTWSIIKKRATVPYRGFEFAVGLQFYPFR</sequence>